<dbReference type="EMBL" id="D13491">
    <property type="protein sequence ID" value="BAA02719.1"/>
    <property type="status" value="ALT_FRAME"/>
    <property type="molecule type" value="mRNA"/>
</dbReference>
<dbReference type="EMBL" id="AP002057">
    <property type="protein sequence ID" value="BAB03170.1"/>
    <property type="molecule type" value="Genomic_DNA"/>
</dbReference>
<dbReference type="EMBL" id="CP002686">
    <property type="protein sequence ID" value="AEE77484.1"/>
    <property type="molecule type" value="Genomic_DNA"/>
</dbReference>
<dbReference type="EMBL" id="BT002507">
    <property type="protein sequence ID" value="AAO00867.1"/>
    <property type="molecule type" value="mRNA"/>
</dbReference>
<dbReference type="EMBL" id="AK318679">
    <property type="protein sequence ID" value="BAH56794.1"/>
    <property type="molecule type" value="mRNA"/>
</dbReference>
<dbReference type="EMBL" id="AK221855">
    <property type="protein sequence ID" value="BAD94127.1"/>
    <property type="molecule type" value="mRNA"/>
</dbReference>
<dbReference type="PIR" id="S35511">
    <property type="entry name" value="S35511"/>
</dbReference>
<dbReference type="RefSeq" id="NP_189515.1">
    <molecule id="Q05153-1"/>
    <property type="nucleotide sequence ID" value="NM_113794.4"/>
</dbReference>
<dbReference type="SMR" id="Q05153"/>
<dbReference type="BioGRID" id="7834">
    <property type="interactions" value="37"/>
</dbReference>
<dbReference type="FunCoup" id="Q05153">
    <property type="interactions" value="4819"/>
</dbReference>
<dbReference type="IntAct" id="Q05153">
    <property type="interactions" value="27"/>
</dbReference>
<dbReference type="STRING" id="3702.Q05153"/>
<dbReference type="iPTMnet" id="Q05153"/>
<dbReference type="PaxDb" id="3702-AT3G28730.1"/>
<dbReference type="ProteomicsDB" id="228335">
    <molecule id="Q05153-1"/>
</dbReference>
<dbReference type="EnsemblPlants" id="AT3G28730.1">
    <molecule id="Q05153-1"/>
    <property type="protein sequence ID" value="AT3G28730.1"/>
    <property type="gene ID" value="AT3G28730"/>
</dbReference>
<dbReference type="GeneID" id="822505"/>
<dbReference type="Gramene" id="AT3G28730.1">
    <molecule id="Q05153-1"/>
    <property type="protein sequence ID" value="AT3G28730.1"/>
    <property type="gene ID" value="AT3G28730"/>
</dbReference>
<dbReference type="KEGG" id="ath:AT3G28730"/>
<dbReference type="Araport" id="AT3G28730"/>
<dbReference type="TAIR" id="AT3G28730">
    <property type="gene designation" value="HMG"/>
</dbReference>
<dbReference type="eggNOG" id="KOG0526">
    <property type="taxonomic scope" value="Eukaryota"/>
</dbReference>
<dbReference type="HOGENOM" id="CLU_017374_2_2_1"/>
<dbReference type="InParanoid" id="Q05153"/>
<dbReference type="OMA" id="QVVTKIF"/>
<dbReference type="OrthoDB" id="498543at2759"/>
<dbReference type="PhylomeDB" id="Q05153"/>
<dbReference type="CD-CODE" id="4299E36E">
    <property type="entry name" value="Nucleolus"/>
</dbReference>
<dbReference type="PRO" id="PR:Q05153"/>
<dbReference type="Proteomes" id="UP000006548">
    <property type="component" value="Chromosome 3"/>
</dbReference>
<dbReference type="ExpressionAtlas" id="Q05153">
    <property type="expression patterns" value="baseline and differential"/>
</dbReference>
<dbReference type="GO" id="GO:0000791">
    <property type="term" value="C:euchromatin"/>
    <property type="evidence" value="ECO:0000314"/>
    <property type="project" value="TAIR"/>
</dbReference>
<dbReference type="GO" id="GO:0035101">
    <property type="term" value="C:FACT complex"/>
    <property type="evidence" value="ECO:0000314"/>
    <property type="project" value="TAIR"/>
</dbReference>
<dbReference type="GO" id="GO:0005634">
    <property type="term" value="C:nucleus"/>
    <property type="evidence" value="ECO:0000314"/>
    <property type="project" value="TAIR"/>
</dbReference>
<dbReference type="GO" id="GO:0003677">
    <property type="term" value="F:DNA binding"/>
    <property type="evidence" value="ECO:0007669"/>
    <property type="project" value="UniProtKB-KW"/>
</dbReference>
<dbReference type="GO" id="GO:0003700">
    <property type="term" value="F:DNA-binding transcription factor activity"/>
    <property type="evidence" value="ECO:0000250"/>
    <property type="project" value="TAIR"/>
</dbReference>
<dbReference type="GO" id="GO:0006281">
    <property type="term" value="P:DNA repair"/>
    <property type="evidence" value="ECO:0007669"/>
    <property type="project" value="UniProtKB-KW"/>
</dbReference>
<dbReference type="GO" id="GO:0006260">
    <property type="term" value="P:DNA replication"/>
    <property type="evidence" value="ECO:0007669"/>
    <property type="project" value="UniProtKB-KW"/>
</dbReference>
<dbReference type="GO" id="GO:0000741">
    <property type="term" value="P:karyogamy"/>
    <property type="evidence" value="ECO:0000315"/>
    <property type="project" value="UniProtKB"/>
</dbReference>
<dbReference type="GO" id="GO:0010197">
    <property type="term" value="P:polar nucleus fusion"/>
    <property type="evidence" value="ECO:0000315"/>
    <property type="project" value="UniProtKB"/>
</dbReference>
<dbReference type="GO" id="GO:0010228">
    <property type="term" value="P:vegetative to reproductive phase transition of meristem"/>
    <property type="evidence" value="ECO:0000315"/>
    <property type="project" value="TAIR"/>
</dbReference>
<dbReference type="CDD" id="cd22013">
    <property type="entry name" value="HMG-box_AtSSRP1"/>
    <property type="match status" value="1"/>
</dbReference>
<dbReference type="CDD" id="cd13230">
    <property type="entry name" value="PH1_SSRP1-like"/>
    <property type="match status" value="1"/>
</dbReference>
<dbReference type="CDD" id="cd13231">
    <property type="entry name" value="PH2_SSRP1-like"/>
    <property type="match status" value="1"/>
</dbReference>
<dbReference type="FunFam" id="1.10.30.10:FF:000016">
    <property type="entry name" value="FACT complex subunit SSRP1"/>
    <property type="match status" value="1"/>
</dbReference>
<dbReference type="FunFam" id="2.30.29.220:FF:000002">
    <property type="entry name" value="FACT complex subunit SSRP1"/>
    <property type="match status" value="1"/>
</dbReference>
<dbReference type="FunFam" id="2.30.29.30:FF:000214">
    <property type="entry name" value="FACT complex subunit SSRP1"/>
    <property type="match status" value="1"/>
</dbReference>
<dbReference type="FunFam" id="2.30.29.30:FF:000298">
    <property type="entry name" value="FACT complex subunit SSRP1"/>
    <property type="match status" value="1"/>
</dbReference>
<dbReference type="FunFam" id="2.30.29.150:FF:000001">
    <property type="entry name" value="Fact complex subunit ssrp1"/>
    <property type="match status" value="1"/>
</dbReference>
<dbReference type="Gene3D" id="2.30.29.150">
    <property type="match status" value="1"/>
</dbReference>
<dbReference type="Gene3D" id="1.10.30.10">
    <property type="entry name" value="High mobility group box domain"/>
    <property type="match status" value="1"/>
</dbReference>
<dbReference type="Gene3D" id="2.30.29.30">
    <property type="entry name" value="Pleckstrin-homology domain (PH domain)/Phosphotyrosine-binding domain (PTB)"/>
    <property type="match status" value="2"/>
</dbReference>
<dbReference type="Gene3D" id="2.30.29.220">
    <property type="entry name" value="Structure-specific recognition protein (SSRP1)"/>
    <property type="match status" value="1"/>
</dbReference>
<dbReference type="InterPro" id="IPR009071">
    <property type="entry name" value="HMG_box_dom"/>
</dbReference>
<dbReference type="InterPro" id="IPR036910">
    <property type="entry name" value="HMG_box_dom_sf"/>
</dbReference>
<dbReference type="InterPro" id="IPR011993">
    <property type="entry name" value="PH-like_dom_sf"/>
</dbReference>
<dbReference type="InterPro" id="IPR013719">
    <property type="entry name" value="RTT106/SPT16-like_middle_dom"/>
</dbReference>
<dbReference type="InterPro" id="IPR050454">
    <property type="entry name" value="RTT106/SSRP1_HistChap/FACT"/>
</dbReference>
<dbReference type="InterPro" id="IPR048993">
    <property type="entry name" value="SSRP1-like_PH1"/>
</dbReference>
<dbReference type="InterPro" id="IPR000969">
    <property type="entry name" value="SSRP1/POB3"/>
</dbReference>
<dbReference type="InterPro" id="IPR035417">
    <property type="entry name" value="SSRP1/POB3_N"/>
</dbReference>
<dbReference type="InterPro" id="IPR024954">
    <property type="entry name" value="SSRP1_DD"/>
</dbReference>
<dbReference type="InterPro" id="IPR038167">
    <property type="entry name" value="SSRP1_sf"/>
</dbReference>
<dbReference type="PANTHER" id="PTHR45849">
    <property type="entry name" value="FACT COMPLEX SUBUNIT SSRP1"/>
    <property type="match status" value="1"/>
</dbReference>
<dbReference type="PANTHER" id="PTHR45849:SF1">
    <property type="entry name" value="FACT COMPLEX SUBUNIT SSRP1"/>
    <property type="match status" value="1"/>
</dbReference>
<dbReference type="Pfam" id="PF00505">
    <property type="entry name" value="HMG_box"/>
    <property type="match status" value="1"/>
</dbReference>
<dbReference type="Pfam" id="PF21103">
    <property type="entry name" value="PH1_SSRP1-like"/>
    <property type="match status" value="1"/>
</dbReference>
<dbReference type="Pfam" id="PF17292">
    <property type="entry name" value="POB3_N"/>
    <property type="match status" value="1"/>
</dbReference>
<dbReference type="Pfam" id="PF08512">
    <property type="entry name" value="Rttp106-like_middle"/>
    <property type="match status" value="1"/>
</dbReference>
<dbReference type="Pfam" id="PF03531">
    <property type="entry name" value="SSrecog"/>
    <property type="match status" value="1"/>
</dbReference>
<dbReference type="PRINTS" id="PR00887">
    <property type="entry name" value="SSRCOGNITION"/>
</dbReference>
<dbReference type="SMART" id="SM00398">
    <property type="entry name" value="HMG"/>
    <property type="match status" value="1"/>
</dbReference>
<dbReference type="SMART" id="SM01287">
    <property type="entry name" value="Rtt106"/>
    <property type="match status" value="1"/>
</dbReference>
<dbReference type="SUPFAM" id="SSF47095">
    <property type="entry name" value="HMG-box"/>
    <property type="match status" value="1"/>
</dbReference>
<dbReference type="SUPFAM" id="SSF50729">
    <property type="entry name" value="PH domain-like"/>
    <property type="match status" value="1"/>
</dbReference>
<dbReference type="PROSITE" id="PS50118">
    <property type="entry name" value="HMG_BOX_2"/>
    <property type="match status" value="1"/>
</dbReference>
<evidence type="ECO:0000250" key="1"/>
<evidence type="ECO:0000255" key="2">
    <source>
        <dbReference type="PROSITE-ProRule" id="PRU00267"/>
    </source>
</evidence>
<evidence type="ECO:0000256" key="3">
    <source>
        <dbReference type="SAM" id="MobiDB-lite"/>
    </source>
</evidence>
<evidence type="ECO:0000269" key="4">
    <source>
    </source>
</evidence>
<evidence type="ECO:0000269" key="5">
    <source>
    </source>
</evidence>
<evidence type="ECO:0000303" key="6">
    <source>
    </source>
</evidence>
<evidence type="ECO:0000303" key="7">
    <source>
    </source>
</evidence>
<evidence type="ECO:0000305" key="8"/>
<evidence type="ECO:0000305" key="9">
    <source>
    </source>
</evidence>
<reference key="1">
    <citation type="journal article" date="1992" name="Nucleic Acids Res.">
        <title>A novel Arabidopsis DNA binding protein contains the conserved motif of HMG-box proteins.</title>
        <authorList>
            <person name="Yamaguchi-Shinozaki K."/>
            <person name="Shinozaki K."/>
        </authorList>
    </citation>
    <scope>NUCLEOTIDE SEQUENCE [MRNA] (ISOFORM 1)</scope>
</reference>
<reference key="2">
    <citation type="journal article" date="2000" name="DNA Res.">
        <title>Structural analysis of Arabidopsis thaliana chromosome 3. II. Sequence features of the 4,251,695 bp regions covered by 90 P1, TAC and BAC clones.</title>
        <authorList>
            <person name="Kaneko T."/>
            <person name="Katoh T."/>
            <person name="Sato S."/>
            <person name="Nakamura Y."/>
            <person name="Asamizu E."/>
            <person name="Tabata S."/>
        </authorList>
    </citation>
    <scope>NUCLEOTIDE SEQUENCE [LARGE SCALE GENOMIC DNA]</scope>
    <source>
        <strain>cv. Columbia</strain>
    </source>
</reference>
<reference key="3">
    <citation type="journal article" date="2017" name="Plant J.">
        <title>Araport11: a complete reannotation of the Arabidopsis thaliana reference genome.</title>
        <authorList>
            <person name="Cheng C.Y."/>
            <person name="Krishnakumar V."/>
            <person name="Chan A.P."/>
            <person name="Thibaud-Nissen F."/>
            <person name="Schobel S."/>
            <person name="Town C.D."/>
        </authorList>
    </citation>
    <scope>GENOME REANNOTATION</scope>
    <source>
        <strain>cv. Columbia</strain>
    </source>
</reference>
<reference key="4">
    <citation type="journal article" date="2003" name="Science">
        <title>Empirical analysis of transcriptional activity in the Arabidopsis genome.</title>
        <authorList>
            <person name="Yamada K."/>
            <person name="Lim J."/>
            <person name="Dale J.M."/>
            <person name="Chen H."/>
            <person name="Shinn P."/>
            <person name="Palm C.J."/>
            <person name="Southwick A.M."/>
            <person name="Wu H.C."/>
            <person name="Kim C.J."/>
            <person name="Nguyen M."/>
            <person name="Pham P.K."/>
            <person name="Cheuk R.F."/>
            <person name="Karlin-Newmann G."/>
            <person name="Liu S.X."/>
            <person name="Lam B."/>
            <person name="Sakano H."/>
            <person name="Wu T."/>
            <person name="Yu G."/>
            <person name="Miranda M."/>
            <person name="Quach H.L."/>
            <person name="Tripp M."/>
            <person name="Chang C.H."/>
            <person name="Lee J.M."/>
            <person name="Toriumi M.J."/>
            <person name="Chan M.M."/>
            <person name="Tang C.C."/>
            <person name="Onodera C.S."/>
            <person name="Deng J.M."/>
            <person name="Akiyama K."/>
            <person name="Ansari Y."/>
            <person name="Arakawa T."/>
            <person name="Banh J."/>
            <person name="Banno F."/>
            <person name="Bowser L."/>
            <person name="Brooks S.Y."/>
            <person name="Carninci P."/>
            <person name="Chao Q."/>
            <person name="Choy N."/>
            <person name="Enju A."/>
            <person name="Goldsmith A.D."/>
            <person name="Gurjal M."/>
            <person name="Hansen N.F."/>
            <person name="Hayashizaki Y."/>
            <person name="Johnson-Hopson C."/>
            <person name="Hsuan V.W."/>
            <person name="Iida K."/>
            <person name="Karnes M."/>
            <person name="Khan S."/>
            <person name="Koesema E."/>
            <person name="Ishida J."/>
            <person name="Jiang P.X."/>
            <person name="Jones T."/>
            <person name="Kawai J."/>
            <person name="Kamiya A."/>
            <person name="Meyers C."/>
            <person name="Nakajima M."/>
            <person name="Narusaka M."/>
            <person name="Seki M."/>
            <person name="Sakurai T."/>
            <person name="Satou M."/>
            <person name="Tamse R."/>
            <person name="Vaysberg M."/>
            <person name="Wallender E.K."/>
            <person name="Wong C."/>
            <person name="Yamamura Y."/>
            <person name="Yuan S."/>
            <person name="Shinozaki K."/>
            <person name="Davis R.W."/>
            <person name="Theologis A."/>
            <person name="Ecker J.R."/>
        </authorList>
    </citation>
    <scope>NUCLEOTIDE SEQUENCE [LARGE SCALE MRNA] (ISOFORM 1)</scope>
    <source>
        <strain>cv. Columbia</strain>
    </source>
</reference>
<reference key="5">
    <citation type="journal article" date="2009" name="DNA Res.">
        <title>Analysis of multiple occurrences of alternative splicing events in Arabidopsis thaliana using novel sequenced full-length cDNAs.</title>
        <authorList>
            <person name="Iida K."/>
            <person name="Fukami-Kobayashi K."/>
            <person name="Toyoda A."/>
            <person name="Sakaki Y."/>
            <person name="Kobayashi M."/>
            <person name="Seki M."/>
            <person name="Shinozaki K."/>
        </authorList>
    </citation>
    <scope>NUCLEOTIDE SEQUENCE [LARGE SCALE MRNA] (ISOFORM 2)</scope>
    <source>
        <strain>cv. Columbia</strain>
        <tissue>Rosette leaf</tissue>
    </source>
</reference>
<reference key="6">
    <citation type="submission" date="2005-03" db="EMBL/GenBank/DDBJ databases">
        <title>Large-scale analysis of RIKEN Arabidopsis full-length (RAFL) cDNAs.</title>
        <authorList>
            <person name="Totoki Y."/>
            <person name="Seki M."/>
            <person name="Ishida J."/>
            <person name="Nakajima M."/>
            <person name="Enju A."/>
            <person name="Kamiya A."/>
            <person name="Narusaka M."/>
            <person name="Shin-i T."/>
            <person name="Nakagawa M."/>
            <person name="Sakamoto N."/>
            <person name="Oishi K."/>
            <person name="Kohara Y."/>
            <person name="Kobayashi M."/>
            <person name="Toyoda A."/>
            <person name="Sakaki Y."/>
            <person name="Sakurai T."/>
            <person name="Iida K."/>
            <person name="Akiyama K."/>
            <person name="Satou M."/>
            <person name="Toyoda T."/>
            <person name="Konagaya A."/>
            <person name="Carninci P."/>
            <person name="Kawai J."/>
            <person name="Hayashizaki Y."/>
            <person name="Shinozaki K."/>
        </authorList>
    </citation>
    <scope>NUCLEOTIDE SEQUENCE [LARGE SCALE MRNA] OF 438-646 (ISOFORM 1)</scope>
    <source>
        <strain>cv. Columbia</strain>
    </source>
</reference>
<reference key="7">
    <citation type="journal article" date="2004" name="Plant J.">
        <title>The chromatin remodelling complex FACT associates with actively transcribed regions of the Arabidopsis genome.</title>
        <authorList>
            <person name="Duroux M."/>
            <person name="Houben A."/>
            <person name="Ruzicka K."/>
            <person name="Friml J."/>
            <person name="Grasser K.D."/>
        </authorList>
    </citation>
    <scope>FUNCTION</scope>
    <scope>SUBCELLULAR LOCATION</scope>
    <scope>TISSUE SPECIFICITY</scope>
</reference>
<reference key="8">
    <citation type="journal article" date="2006" name="Plant Physiol.">
        <title>NUCLEAR FUSION DEFECTIVE1 encodes the Arabidopsis RPL21M protein and is required for karyogamy during female gametophyte development and fertilization.</title>
        <authorList>
            <person name="Portereiko M.F."/>
            <person name="Sandaklie-Nikolova L."/>
            <person name="Lloyd A."/>
            <person name="Dever C.A."/>
            <person name="Otsuga D."/>
            <person name="Drews G.N."/>
        </authorList>
    </citation>
    <scope>FUNCTION</scope>
    <scope>DISRUPTION PHENOTYPE</scope>
    <source>
        <strain>cv. Columbia</strain>
    </source>
</reference>
<proteinExistence type="evidence at protein level"/>
<protein>
    <recommendedName>
        <fullName>FACT complex subunit SSRP1</fullName>
    </recommendedName>
    <alternativeName>
        <fullName>Facilitates chromatin transcription complex subunit SSRP1</fullName>
    </alternativeName>
    <alternativeName>
        <fullName>High mobility group B protein 8</fullName>
    </alternativeName>
    <alternativeName>
        <fullName>Nucleosome/chromatin assembly factor group D 08</fullName>
        <shortName>Nucleosome/chromatin assembly factor group D 8</shortName>
    </alternativeName>
    <alternativeName>
        <fullName evidence="6">Protein NUCLEAR FUSION DEFECTIVE 8</fullName>
    </alternativeName>
    <alternativeName>
        <fullName>Recombination signal sequence recognition protein 1</fullName>
    </alternativeName>
</protein>
<comment type="function">
    <text evidence="5 9">Component of the FACT complex, a general chromatin factor that acts to reorganize nucleosomes. The FACT complex is involved in multiple processes that require DNA as a template such as mRNA elongation, DNA replication and DNA repair. During transcription elongation the FACT complex acts as a histone chaperone that both destabilizes and restores nucleosomal structure. It facilitates the passage of RNA polymerase II and transcription by promoting the dissociation of one histone H2A-H2B dimer from the nucleosome, then subsequently promotes the reestablishment of the nucleosome following the passage of RNA polymerase II. Binds specifically to double-stranded DNA (Probable). Required for karyogamy during female gametophyte development, when the two polar nuclei fuse to form the diploid central cell nucleus (PubMed:16698901).</text>
</comment>
<comment type="subunit">
    <text evidence="1">Component of the FACT complex, a stable heterodimer of SPT16 and SSRP1.</text>
</comment>
<comment type="interaction">
    <interactant intactId="EBI-15191543">
        <id>Q05153</id>
    </interactant>
    <interactant intactId="EBI-15197363">
        <id>Q9M2K8</id>
        <label>AGL18</label>
    </interactant>
    <organismsDiffer>false</organismsDiffer>
    <experiments>3</experiments>
</comment>
<comment type="interaction">
    <interactant intactId="EBI-15191543">
        <id>Q05153</id>
    </interactant>
    <interactant intactId="EBI-15191973">
        <id>C0SUU6</id>
        <label>At1g11510</label>
    </interactant>
    <organismsDiffer>false</organismsDiffer>
    <experiments>3</experiments>
</comment>
<comment type="interaction">
    <interactant intactId="EBI-15191543">
        <id>Q05153</id>
    </interactant>
    <interactant intactId="EBI-15193203">
        <id>Q9C6K4</id>
        <label>At1g76870</label>
    </interactant>
    <organismsDiffer>false</organismsDiffer>
    <experiments>3</experiments>
</comment>
<comment type="interaction">
    <interactant intactId="EBI-15191543">
        <id>Q05153</id>
    </interactant>
    <interactant intactId="EBI-15195019">
        <id>O23063</id>
        <label>At4g00390</label>
    </interactant>
    <organismsDiffer>false</organismsDiffer>
    <experiments>3</experiments>
</comment>
<comment type="interaction">
    <interactant intactId="EBI-15191543">
        <id>Q05153</id>
    </interactant>
    <interactant intactId="EBI-15193831">
        <id>F4K5T4</id>
        <label>At5g28040</label>
    </interactant>
    <organismsDiffer>false</organismsDiffer>
    <experiments>3</experiments>
</comment>
<comment type="interaction">
    <interactant intactId="EBI-15191543">
        <id>Q05153</id>
    </interactant>
    <interactant intactId="EBI-15191723">
        <id>Q9ASZ1</id>
        <label>GEBP</label>
    </interactant>
    <organismsDiffer>false</organismsDiffer>
    <experiments>3</experiments>
</comment>
<comment type="interaction">
    <interactant intactId="EBI-15191543">
        <id>Q05153</id>
    </interactant>
    <interactant intactId="EBI-4426914">
        <id>Q8VYD2</id>
        <label>GPL1</label>
    </interactant>
    <organismsDiffer>false</organismsDiffer>
    <experiments>4</experiments>
</comment>
<comment type="interaction">
    <interactant intactId="EBI-15191543">
        <id>Q05153</id>
    </interactant>
    <interactant intactId="EBI-2367923">
        <id>Q38829</id>
        <label>IAA11</label>
    </interactant>
    <organismsDiffer>false</organismsDiffer>
    <experiments>3</experiments>
</comment>
<comment type="interaction">
    <interactant intactId="EBI-15191543">
        <id>Q05153</id>
    </interactant>
    <interactant intactId="EBI-4424255">
        <id>Q8LG05</id>
        <label>STKL1</label>
    </interactant>
    <organismsDiffer>false</organismsDiffer>
    <experiments>3</experiments>
</comment>
<comment type="subcellular location">
    <subcellularLocation>
        <location evidence="2 4">Nucleus</location>
    </subcellularLocation>
    <subcellularLocation>
        <location evidence="4">Chromosome</location>
    </subcellularLocation>
    <text>Colocalizes with RNA polymerase II on chromatin. Recruited to actively transcribed loci.</text>
</comment>
<comment type="alternative products">
    <event type="alternative splicing"/>
    <isoform>
        <id>Q05153-1</id>
        <name>1</name>
        <sequence type="displayed"/>
    </isoform>
    <isoform>
        <id>Q05153-2</id>
        <name>2</name>
        <sequence type="described" ref="VSP_039931 VSP_039932"/>
    </isoform>
</comment>
<comment type="tissue specificity">
    <text evidence="4">Widely expressed. Present in embryos, shoots and roots, whereas it is not present in terminally differentiated cells such as mature trichoblasts or cells of the root cap (at protein level).</text>
</comment>
<comment type="disruption phenotype">
    <text evidence="5">Failure of fusion of the polar nuclei during megagametogenesis.</text>
</comment>
<comment type="similarity">
    <text evidence="8">Belongs to the SSRP1 family.</text>
</comment>
<comment type="sequence caution" evidence="8">
    <conflict type="frameshift">
        <sequence resource="EMBL-CDS" id="BAA02719"/>
    </conflict>
</comment>
<feature type="chain" id="PRO_0000048610" description="FACT complex subunit SSRP1">
    <location>
        <begin position="1"/>
        <end position="646"/>
    </location>
</feature>
<feature type="DNA-binding region" description="HMG box" evidence="2">
    <location>
        <begin position="561"/>
        <end position="630"/>
    </location>
</feature>
<feature type="region of interest" description="Disordered" evidence="3">
    <location>
        <begin position="471"/>
        <end position="569"/>
    </location>
</feature>
<feature type="region of interest" description="Disordered" evidence="3">
    <location>
        <begin position="601"/>
        <end position="646"/>
    </location>
</feature>
<feature type="compositionally biased region" description="Acidic residues" evidence="3">
    <location>
        <begin position="476"/>
        <end position="493"/>
    </location>
</feature>
<feature type="compositionally biased region" description="Basic and acidic residues" evidence="3">
    <location>
        <begin position="514"/>
        <end position="529"/>
    </location>
</feature>
<feature type="compositionally biased region" description="Basic and acidic residues" evidence="3">
    <location>
        <begin position="601"/>
        <end position="628"/>
    </location>
</feature>
<feature type="compositionally biased region" description="Polar residues" evidence="3">
    <location>
        <begin position="633"/>
        <end position="646"/>
    </location>
</feature>
<feature type="splice variant" id="VSP_039931" description="In isoform 2." evidence="7">
    <original>NDFKIQYSSVVRLFLLPKSNQPHTFVVIS</original>
    <variation>MTLKSSTVALSVCSCFQSQTNHTRLLLSL</variation>
    <location>
        <begin position="240"/>
        <end position="268"/>
    </location>
</feature>
<feature type="splice variant" id="VSP_039932" description="In isoform 2." evidence="7">
    <location>
        <begin position="269"/>
        <end position="646"/>
    </location>
</feature>
<feature type="sequence conflict" description="In Ref. 1; BAA02719." evidence="8" ref="1">
    <original>SF</original>
    <variation>FL</variation>
    <location>
        <begin position="6"/>
        <end position="7"/>
    </location>
</feature>
<feature type="sequence conflict" description="In Ref. 1; BAA02719." evidence="8" ref="1">
    <original>G</original>
    <variation>E</variation>
    <location>
        <position position="237"/>
    </location>
</feature>
<feature type="sequence conflict" description="In Ref. 6; BAD94127." evidence="8" ref="6">
    <original>D</original>
    <variation>N</variation>
    <location>
        <position position="644"/>
    </location>
</feature>
<gene>
    <name type="primary">SSRP1</name>
    <name type="synonym">HMGB8</name>
    <name evidence="6" type="synonym">NFD8</name>
    <name type="ordered locus">At3g28730</name>
    <name type="ORF">T19N8.2</name>
</gene>
<accession>Q05153</accession>
<accession>C0Z265</accession>
<accession>Q56X23</accession>
<accession>Q9LHA2</accession>
<name>SSRP1_ARATH</name>
<sequence length="646" mass="71646">MADGHSFNNISLSGRGGKNPGLLKINSGGIQWKKQGGGKAVEVDRSDIVSVSWTKVTKSNQLGVKTKDGLYYKFVGFRDQDVPSLSSFFQSSYGKTPDEKQLSVSGRNWGEVDLHGNTLTFLVGSKQAFEVSLADVSQTQLQGKNDVTLEFHVDDTAGANEKDSLMEISFHIPNSNTQFVGDENRPPSQVFNDTIVAMADVSPGVEDAVVTFESIAILTPRGRYNVELHLSFLRLQGQANDFKIQYSSVVRLFLLPKSNQPHTFVVISLDPPIRKGQTMYPHIVMQFETDTVVESELSISDELMNTKFKDKLERSYKGLIHEVFTTVLRWLSGAKITKPGKFRSSQDGFAVKSSLKAEDGVLYPLEKGFFFLPKPPTLILHDEIDYVEFERHAAGGANMHYFDLLIRLKTDHEHLFRNIQRNEYHNLYTFISSKGLKIMNLGGAGTADGVAAVLGDNDDDDAVDPHLTRIRNQAADESDEEDEDFVMGEDDDGGSPTDDSGGDDSDASEGGVGEIKEKSIKKEPKKEASSSKGLPPKRKTVAADEGSSKRKKPKKKKDPNAPKRAMSGFMFFSQMERDNIKKEHPGIAFGEVGKVLGDKWRQMSADDKEPYEAKAQVDKQRYKDEISDYKNPQPMNVDSGNDSDSN</sequence>
<organism>
    <name type="scientific">Arabidopsis thaliana</name>
    <name type="common">Mouse-ear cress</name>
    <dbReference type="NCBI Taxonomy" id="3702"/>
    <lineage>
        <taxon>Eukaryota</taxon>
        <taxon>Viridiplantae</taxon>
        <taxon>Streptophyta</taxon>
        <taxon>Embryophyta</taxon>
        <taxon>Tracheophyta</taxon>
        <taxon>Spermatophyta</taxon>
        <taxon>Magnoliopsida</taxon>
        <taxon>eudicotyledons</taxon>
        <taxon>Gunneridae</taxon>
        <taxon>Pentapetalae</taxon>
        <taxon>rosids</taxon>
        <taxon>malvids</taxon>
        <taxon>Brassicales</taxon>
        <taxon>Brassicaceae</taxon>
        <taxon>Camelineae</taxon>
        <taxon>Arabidopsis</taxon>
    </lineage>
</organism>
<keyword id="KW-0025">Alternative splicing</keyword>
<keyword id="KW-0158">Chromosome</keyword>
<keyword id="KW-0217">Developmental protein</keyword>
<keyword id="KW-0227">DNA damage</keyword>
<keyword id="KW-0234">DNA repair</keyword>
<keyword id="KW-0235">DNA replication</keyword>
<keyword id="KW-0238">DNA-binding</keyword>
<keyword id="KW-0415">Karyogamy</keyword>
<keyword id="KW-0539">Nucleus</keyword>
<keyword id="KW-1185">Reference proteome</keyword>
<keyword id="KW-0804">Transcription</keyword>
<keyword id="KW-0805">Transcription regulation</keyword>